<proteinExistence type="inferred from homology"/>
<dbReference type="EMBL" id="CR382126">
    <property type="protein sequence ID" value="CAG98395.1"/>
    <property type="molecule type" value="Genomic_DNA"/>
</dbReference>
<dbReference type="RefSeq" id="XP_455687.1">
    <property type="nucleotide sequence ID" value="XM_455687.1"/>
</dbReference>
<dbReference type="FunCoup" id="Q6CK52">
    <property type="interactions" value="124"/>
</dbReference>
<dbReference type="STRING" id="284590.Q6CK52"/>
<dbReference type="PaxDb" id="284590-Q6CK52"/>
<dbReference type="KEGG" id="kla:KLLA0_F13486g"/>
<dbReference type="eggNOG" id="ENOG502QQMN">
    <property type="taxonomic scope" value="Eukaryota"/>
</dbReference>
<dbReference type="HOGENOM" id="CLU_060779_0_0_1"/>
<dbReference type="InParanoid" id="Q6CK52"/>
<dbReference type="Proteomes" id="UP000000598">
    <property type="component" value="Chromosome F"/>
</dbReference>
<dbReference type="Gene3D" id="1.10.8.80">
    <property type="entry name" value="Magnesium chelatase subunit I, C-Terminal domain"/>
    <property type="match status" value="1"/>
</dbReference>
<sequence>MSLVSISEGVRAGLVLKRHVVCFTGTSNDQGLKSISDLLSHMDNPAVPSPQSCSIDSLPDTETQNGISCYLVPYSGTAEIDYELQNRFALWLHKSTVPVILVLQDNPLMIPYLRHQFWFACGEDMGQWQDSVVAESIVDSVYMHHSIRRYILDLIVHLRMHRLSKPSQGGGAHSRSLSDMTLLCKWIALTSGSSFITPDMVQTACERYFPWHLQLIESSKEDPSVMYGSQEELVDELINRFDTFAIKMAQEYKNPLFKQLCIVQSVMKDIIPAT</sequence>
<protein>
    <recommendedName>
        <fullName>Maintenance of telomere capping protein 2</fullName>
    </recommendedName>
</protein>
<gene>
    <name type="primary">MTC2</name>
    <name type="ordered locus">KLLA0F13486g</name>
</gene>
<reference key="1">
    <citation type="journal article" date="2004" name="Nature">
        <title>Genome evolution in yeasts.</title>
        <authorList>
            <person name="Dujon B."/>
            <person name="Sherman D."/>
            <person name="Fischer G."/>
            <person name="Durrens P."/>
            <person name="Casaregola S."/>
            <person name="Lafontaine I."/>
            <person name="de Montigny J."/>
            <person name="Marck C."/>
            <person name="Neuveglise C."/>
            <person name="Talla E."/>
            <person name="Goffard N."/>
            <person name="Frangeul L."/>
            <person name="Aigle M."/>
            <person name="Anthouard V."/>
            <person name="Babour A."/>
            <person name="Barbe V."/>
            <person name="Barnay S."/>
            <person name="Blanchin S."/>
            <person name="Beckerich J.-M."/>
            <person name="Beyne E."/>
            <person name="Bleykasten C."/>
            <person name="Boisrame A."/>
            <person name="Boyer J."/>
            <person name="Cattolico L."/>
            <person name="Confanioleri F."/>
            <person name="de Daruvar A."/>
            <person name="Despons L."/>
            <person name="Fabre E."/>
            <person name="Fairhead C."/>
            <person name="Ferry-Dumazet H."/>
            <person name="Groppi A."/>
            <person name="Hantraye F."/>
            <person name="Hennequin C."/>
            <person name="Jauniaux N."/>
            <person name="Joyet P."/>
            <person name="Kachouri R."/>
            <person name="Kerrest A."/>
            <person name="Koszul R."/>
            <person name="Lemaire M."/>
            <person name="Lesur I."/>
            <person name="Ma L."/>
            <person name="Muller H."/>
            <person name="Nicaud J.-M."/>
            <person name="Nikolski M."/>
            <person name="Oztas S."/>
            <person name="Ozier-Kalogeropoulos O."/>
            <person name="Pellenz S."/>
            <person name="Potier S."/>
            <person name="Richard G.-F."/>
            <person name="Straub M.-L."/>
            <person name="Suleau A."/>
            <person name="Swennen D."/>
            <person name="Tekaia F."/>
            <person name="Wesolowski-Louvel M."/>
            <person name="Westhof E."/>
            <person name="Wirth B."/>
            <person name="Zeniou-Meyer M."/>
            <person name="Zivanovic Y."/>
            <person name="Bolotin-Fukuhara M."/>
            <person name="Thierry A."/>
            <person name="Bouchier C."/>
            <person name="Caudron B."/>
            <person name="Scarpelli C."/>
            <person name="Gaillardin C."/>
            <person name="Weissenbach J."/>
            <person name="Wincker P."/>
            <person name="Souciet J.-L."/>
        </authorList>
    </citation>
    <scope>NUCLEOTIDE SEQUENCE [LARGE SCALE GENOMIC DNA]</scope>
    <source>
        <strain>ATCC 8585 / CBS 2359 / DSM 70799 / NBRC 1267 / NRRL Y-1140 / WM37</strain>
    </source>
</reference>
<name>MTC2_KLULA</name>
<accession>Q6CK52</accession>
<feature type="chain" id="PRO_0000407762" description="Maintenance of telomere capping protein 2">
    <location>
        <begin position="1"/>
        <end position="274"/>
    </location>
</feature>
<comment type="function">
    <text evidence="1">May be involved in telomere capping.</text>
</comment>
<comment type="similarity">
    <text evidence="2">Belongs to the MTC2 family.</text>
</comment>
<evidence type="ECO:0000250" key="1"/>
<evidence type="ECO:0000305" key="2"/>
<keyword id="KW-1185">Reference proteome</keyword>
<organism>
    <name type="scientific">Kluyveromyces lactis (strain ATCC 8585 / CBS 2359 / DSM 70799 / NBRC 1267 / NRRL Y-1140 / WM37)</name>
    <name type="common">Yeast</name>
    <name type="synonym">Candida sphaerica</name>
    <dbReference type="NCBI Taxonomy" id="284590"/>
    <lineage>
        <taxon>Eukaryota</taxon>
        <taxon>Fungi</taxon>
        <taxon>Dikarya</taxon>
        <taxon>Ascomycota</taxon>
        <taxon>Saccharomycotina</taxon>
        <taxon>Saccharomycetes</taxon>
        <taxon>Saccharomycetales</taxon>
        <taxon>Saccharomycetaceae</taxon>
        <taxon>Kluyveromyces</taxon>
    </lineage>
</organism>